<feature type="chain" id="PRO_1000045703" description="Probable glycine dehydrogenase (decarboxylating) subunit 2">
    <location>
        <begin position="1"/>
        <end position="490"/>
    </location>
</feature>
<feature type="modified residue" description="N6-(pyridoxal phosphate)lysine" evidence="1">
    <location>
        <position position="273"/>
    </location>
</feature>
<gene>
    <name evidence="1" type="primary">gcvPB</name>
    <name type="ordered locus">SAUSA300_1496</name>
</gene>
<keyword id="KW-0560">Oxidoreductase</keyword>
<keyword id="KW-0663">Pyridoxal phosphate</keyword>
<comment type="function">
    <text evidence="1">The glycine cleavage system catalyzes the degradation of glycine. The P protein binds the alpha-amino group of glycine through its pyridoxal phosphate cofactor; CO(2) is released and the remaining methylamine moiety is then transferred to the lipoamide cofactor of the H protein.</text>
</comment>
<comment type="catalytic activity">
    <reaction evidence="1">
        <text>N(6)-[(R)-lipoyl]-L-lysyl-[glycine-cleavage complex H protein] + glycine + H(+) = N(6)-[(R)-S(8)-aminomethyldihydrolipoyl]-L-lysyl-[glycine-cleavage complex H protein] + CO2</text>
        <dbReference type="Rhea" id="RHEA:24304"/>
        <dbReference type="Rhea" id="RHEA-COMP:10494"/>
        <dbReference type="Rhea" id="RHEA-COMP:10495"/>
        <dbReference type="ChEBI" id="CHEBI:15378"/>
        <dbReference type="ChEBI" id="CHEBI:16526"/>
        <dbReference type="ChEBI" id="CHEBI:57305"/>
        <dbReference type="ChEBI" id="CHEBI:83099"/>
        <dbReference type="ChEBI" id="CHEBI:83143"/>
        <dbReference type="EC" id="1.4.4.2"/>
    </reaction>
</comment>
<comment type="cofactor">
    <cofactor evidence="1">
        <name>pyridoxal 5'-phosphate</name>
        <dbReference type="ChEBI" id="CHEBI:597326"/>
    </cofactor>
</comment>
<comment type="subunit">
    <text evidence="1">The glycine cleavage system is composed of four proteins: P, T, L and H. In this organism, the P 'protein' is a heterodimer of two subunits.</text>
</comment>
<comment type="similarity">
    <text evidence="1">Belongs to the GcvP family. C-terminal subunit subfamily.</text>
</comment>
<name>GCSPB_STAA3</name>
<evidence type="ECO:0000255" key="1">
    <source>
        <dbReference type="HAMAP-Rule" id="MF_00713"/>
    </source>
</evidence>
<protein>
    <recommendedName>
        <fullName evidence="1">Probable glycine dehydrogenase (decarboxylating) subunit 2</fullName>
        <ecNumber evidence="1">1.4.4.2</ecNumber>
    </recommendedName>
    <alternativeName>
        <fullName evidence="1">Glycine cleavage system P-protein subunit 2</fullName>
    </alternativeName>
    <alternativeName>
        <fullName evidence="1">Glycine decarboxylase subunit 2</fullName>
    </alternativeName>
    <alternativeName>
        <fullName evidence="1">Glycine dehydrogenase (aminomethyl-transferring) subunit 2</fullName>
    </alternativeName>
</protein>
<reference key="1">
    <citation type="journal article" date="2006" name="Lancet">
        <title>Complete genome sequence of USA300, an epidemic clone of community-acquired meticillin-resistant Staphylococcus aureus.</title>
        <authorList>
            <person name="Diep B.A."/>
            <person name="Gill S.R."/>
            <person name="Chang R.F."/>
            <person name="Phan T.H."/>
            <person name="Chen J.H."/>
            <person name="Davidson M.G."/>
            <person name="Lin F."/>
            <person name="Lin J."/>
            <person name="Carleton H.A."/>
            <person name="Mongodin E.F."/>
            <person name="Sensabaugh G.F."/>
            <person name="Perdreau-Remington F."/>
        </authorList>
    </citation>
    <scope>NUCLEOTIDE SEQUENCE [LARGE SCALE GENOMIC DNA]</scope>
    <source>
        <strain>USA300</strain>
    </source>
</reference>
<organism>
    <name type="scientific">Staphylococcus aureus (strain USA300)</name>
    <dbReference type="NCBI Taxonomy" id="367830"/>
    <lineage>
        <taxon>Bacteria</taxon>
        <taxon>Bacillati</taxon>
        <taxon>Bacillota</taxon>
        <taxon>Bacilli</taxon>
        <taxon>Bacillales</taxon>
        <taxon>Staphylococcaceae</taxon>
        <taxon>Staphylococcus</taxon>
    </lineage>
</organism>
<sequence>MTSKSSPLIFERSREGRYAYSLPKSDIKTNSVESLLDDKFIRKNKAEFPEVAELDLVRHYTELSNKNFGVDNGFYPLGSCTMKYNPKINEKVARIPGFSESHPLQDEDQVQGSLEIIYSLQEELKEITGMDEVTLQPAAGAHGEWTALMIFKAYHENNGEGHRDEVIVPDSAHGTNPASASFAGFKSVTVKSNERGEVDIDDLKRVVNENTAAIMLTNPNTLGIFEKNIMEIREIVHNAGGLLYYDGANLNAIMDKVRPGDMGFDAVHLNLHKTFTGPHGGGGPGSGPVGVVKELASYLPKPMVIKDGDKFKYDNDIKNSIGRVKPFYGNFGIYLRAYTYIRTMGATGLKEVSEAAVLNANYIKARLSKHFEIPYKQYCKHEFVLSGVRQKEFGVRTLDMAKRLLDFGVHPPTIYFPLNVEEGMMIEPTETESKETLDYFIDTLISIAEEAKNDPDKVLEAPHTTVIDRLDEATAARKPILKFENLKQEK</sequence>
<dbReference type="EC" id="1.4.4.2" evidence="1"/>
<dbReference type="EMBL" id="CP000255">
    <property type="protein sequence ID" value="ABD20628.1"/>
    <property type="molecule type" value="Genomic_DNA"/>
</dbReference>
<dbReference type="RefSeq" id="WP_000202189.1">
    <property type="nucleotide sequence ID" value="NZ_CP027476.1"/>
</dbReference>
<dbReference type="SMR" id="Q2FGI7"/>
<dbReference type="KEGG" id="saa:SAUSA300_1496"/>
<dbReference type="HOGENOM" id="CLU_004620_5_0_9"/>
<dbReference type="OMA" id="FPLIVHE"/>
<dbReference type="Proteomes" id="UP000001939">
    <property type="component" value="Chromosome"/>
</dbReference>
<dbReference type="GO" id="GO:0005829">
    <property type="term" value="C:cytosol"/>
    <property type="evidence" value="ECO:0007669"/>
    <property type="project" value="TreeGrafter"/>
</dbReference>
<dbReference type="GO" id="GO:0005960">
    <property type="term" value="C:glycine cleavage complex"/>
    <property type="evidence" value="ECO:0007669"/>
    <property type="project" value="TreeGrafter"/>
</dbReference>
<dbReference type="GO" id="GO:0016594">
    <property type="term" value="F:glycine binding"/>
    <property type="evidence" value="ECO:0007669"/>
    <property type="project" value="TreeGrafter"/>
</dbReference>
<dbReference type="GO" id="GO:0004375">
    <property type="term" value="F:glycine dehydrogenase (decarboxylating) activity"/>
    <property type="evidence" value="ECO:0007669"/>
    <property type="project" value="UniProtKB-EC"/>
</dbReference>
<dbReference type="GO" id="GO:0030170">
    <property type="term" value="F:pyridoxal phosphate binding"/>
    <property type="evidence" value="ECO:0007669"/>
    <property type="project" value="TreeGrafter"/>
</dbReference>
<dbReference type="GO" id="GO:0019464">
    <property type="term" value="P:glycine decarboxylation via glycine cleavage system"/>
    <property type="evidence" value="ECO:0007669"/>
    <property type="project" value="UniProtKB-UniRule"/>
</dbReference>
<dbReference type="CDD" id="cd00613">
    <property type="entry name" value="GDC-P"/>
    <property type="match status" value="1"/>
</dbReference>
<dbReference type="FunFam" id="3.40.640.10:FF:000034">
    <property type="entry name" value="Probable glycine dehydrogenase (decarboxylating) subunit 2"/>
    <property type="match status" value="1"/>
</dbReference>
<dbReference type="FunFam" id="3.90.1150.10:FF:000014">
    <property type="entry name" value="Probable glycine dehydrogenase (decarboxylating) subunit 2"/>
    <property type="match status" value="1"/>
</dbReference>
<dbReference type="Gene3D" id="6.20.440.10">
    <property type="match status" value="1"/>
</dbReference>
<dbReference type="Gene3D" id="3.90.1150.10">
    <property type="entry name" value="Aspartate Aminotransferase, domain 1"/>
    <property type="match status" value="1"/>
</dbReference>
<dbReference type="Gene3D" id="3.40.640.10">
    <property type="entry name" value="Type I PLP-dependent aspartate aminotransferase-like (Major domain)"/>
    <property type="match status" value="1"/>
</dbReference>
<dbReference type="HAMAP" id="MF_00713">
    <property type="entry name" value="GcvPB"/>
    <property type="match status" value="1"/>
</dbReference>
<dbReference type="InterPro" id="IPR000192">
    <property type="entry name" value="Aminotrans_V_dom"/>
</dbReference>
<dbReference type="InterPro" id="IPR023012">
    <property type="entry name" value="GcvPB"/>
</dbReference>
<dbReference type="InterPro" id="IPR049316">
    <property type="entry name" value="GDC-P_C"/>
</dbReference>
<dbReference type="InterPro" id="IPR020581">
    <property type="entry name" value="GDC_P"/>
</dbReference>
<dbReference type="InterPro" id="IPR015424">
    <property type="entry name" value="PyrdxlP-dep_Trfase"/>
</dbReference>
<dbReference type="InterPro" id="IPR015421">
    <property type="entry name" value="PyrdxlP-dep_Trfase_major"/>
</dbReference>
<dbReference type="InterPro" id="IPR015422">
    <property type="entry name" value="PyrdxlP-dep_Trfase_small"/>
</dbReference>
<dbReference type="NCBIfam" id="NF003346">
    <property type="entry name" value="PRK04366.1"/>
    <property type="match status" value="1"/>
</dbReference>
<dbReference type="PANTHER" id="PTHR11773:SF1">
    <property type="entry name" value="GLYCINE DEHYDROGENASE (DECARBOXYLATING), MITOCHONDRIAL"/>
    <property type="match status" value="1"/>
</dbReference>
<dbReference type="PANTHER" id="PTHR11773">
    <property type="entry name" value="GLYCINE DEHYDROGENASE, DECARBOXYLATING"/>
    <property type="match status" value="1"/>
</dbReference>
<dbReference type="Pfam" id="PF00266">
    <property type="entry name" value="Aminotran_5"/>
    <property type="match status" value="1"/>
</dbReference>
<dbReference type="Pfam" id="PF21478">
    <property type="entry name" value="GcvP2_C"/>
    <property type="match status" value="1"/>
</dbReference>
<dbReference type="SUPFAM" id="SSF53383">
    <property type="entry name" value="PLP-dependent transferases"/>
    <property type="match status" value="1"/>
</dbReference>
<proteinExistence type="inferred from homology"/>
<accession>Q2FGI7</accession>